<sequence length="147" mass="16465">MEQTYVMVKPDGVERGLIGEIVTRIEKKGLKIVAGKLMQIDRELAEKHYAEHIGKSFFEDLIGFITSGPVFAMVLEGDDAIATARRMMGKTNPLEADPGTIRADYAIHTNRNVIHGSDSLESAKREIQLFFAPQEILSYQKAIDTWI</sequence>
<protein>
    <recommendedName>
        <fullName evidence="1">Nucleoside diphosphate kinase</fullName>
        <shortName evidence="1">NDK</shortName>
        <shortName evidence="1">NDP kinase</shortName>
        <ecNumber evidence="1">2.7.4.6</ecNumber>
    </recommendedName>
    <alternativeName>
        <fullName evidence="1">Nucleoside-2-P kinase</fullName>
    </alternativeName>
</protein>
<keyword id="KW-0067">ATP-binding</keyword>
<keyword id="KW-0963">Cytoplasm</keyword>
<keyword id="KW-0418">Kinase</keyword>
<keyword id="KW-0460">Magnesium</keyword>
<keyword id="KW-0479">Metal-binding</keyword>
<keyword id="KW-0546">Nucleotide metabolism</keyword>
<keyword id="KW-0547">Nucleotide-binding</keyword>
<keyword id="KW-0597">Phosphoprotein</keyword>
<keyword id="KW-0808">Transferase</keyword>
<proteinExistence type="inferred from homology"/>
<accession>B8DBZ7</accession>
<dbReference type="EC" id="2.7.4.6" evidence="1"/>
<dbReference type="EMBL" id="CP001175">
    <property type="protein sequence ID" value="ACK38983.1"/>
    <property type="molecule type" value="Genomic_DNA"/>
</dbReference>
<dbReference type="RefSeq" id="WP_003737026.1">
    <property type="nucleotide sequence ID" value="NC_011660.1"/>
</dbReference>
<dbReference type="SMR" id="B8DBZ7"/>
<dbReference type="KEGG" id="lmh:LMHCC_0627"/>
<dbReference type="HOGENOM" id="CLU_060216_6_3_9"/>
<dbReference type="GO" id="GO:0005737">
    <property type="term" value="C:cytoplasm"/>
    <property type="evidence" value="ECO:0007669"/>
    <property type="project" value="UniProtKB-SubCell"/>
</dbReference>
<dbReference type="GO" id="GO:0005524">
    <property type="term" value="F:ATP binding"/>
    <property type="evidence" value="ECO:0007669"/>
    <property type="project" value="UniProtKB-UniRule"/>
</dbReference>
<dbReference type="GO" id="GO:0046872">
    <property type="term" value="F:metal ion binding"/>
    <property type="evidence" value="ECO:0007669"/>
    <property type="project" value="UniProtKB-KW"/>
</dbReference>
<dbReference type="GO" id="GO:0004550">
    <property type="term" value="F:nucleoside diphosphate kinase activity"/>
    <property type="evidence" value="ECO:0007669"/>
    <property type="project" value="UniProtKB-UniRule"/>
</dbReference>
<dbReference type="GO" id="GO:0006241">
    <property type="term" value="P:CTP biosynthetic process"/>
    <property type="evidence" value="ECO:0007669"/>
    <property type="project" value="UniProtKB-UniRule"/>
</dbReference>
<dbReference type="GO" id="GO:0006183">
    <property type="term" value="P:GTP biosynthetic process"/>
    <property type="evidence" value="ECO:0007669"/>
    <property type="project" value="UniProtKB-UniRule"/>
</dbReference>
<dbReference type="GO" id="GO:0006228">
    <property type="term" value="P:UTP biosynthetic process"/>
    <property type="evidence" value="ECO:0007669"/>
    <property type="project" value="UniProtKB-UniRule"/>
</dbReference>
<dbReference type="CDD" id="cd04413">
    <property type="entry name" value="NDPk_I"/>
    <property type="match status" value="1"/>
</dbReference>
<dbReference type="FunFam" id="3.30.70.141:FF:000003">
    <property type="entry name" value="Nucleoside diphosphate kinase"/>
    <property type="match status" value="1"/>
</dbReference>
<dbReference type="Gene3D" id="3.30.70.141">
    <property type="entry name" value="Nucleoside diphosphate kinase-like domain"/>
    <property type="match status" value="1"/>
</dbReference>
<dbReference type="HAMAP" id="MF_00451">
    <property type="entry name" value="NDP_kinase"/>
    <property type="match status" value="1"/>
</dbReference>
<dbReference type="InterPro" id="IPR034907">
    <property type="entry name" value="NDK-like_dom"/>
</dbReference>
<dbReference type="InterPro" id="IPR036850">
    <property type="entry name" value="NDK-like_dom_sf"/>
</dbReference>
<dbReference type="InterPro" id="IPR001564">
    <property type="entry name" value="Nucleoside_diP_kinase"/>
</dbReference>
<dbReference type="InterPro" id="IPR023005">
    <property type="entry name" value="Nucleoside_diP_kinase_AS"/>
</dbReference>
<dbReference type="NCBIfam" id="NF001908">
    <property type="entry name" value="PRK00668.1"/>
    <property type="match status" value="1"/>
</dbReference>
<dbReference type="PANTHER" id="PTHR11349">
    <property type="entry name" value="NUCLEOSIDE DIPHOSPHATE KINASE"/>
    <property type="match status" value="1"/>
</dbReference>
<dbReference type="Pfam" id="PF00334">
    <property type="entry name" value="NDK"/>
    <property type="match status" value="1"/>
</dbReference>
<dbReference type="PRINTS" id="PR01243">
    <property type="entry name" value="NUCDPKINASE"/>
</dbReference>
<dbReference type="SMART" id="SM00562">
    <property type="entry name" value="NDK"/>
    <property type="match status" value="1"/>
</dbReference>
<dbReference type="SUPFAM" id="SSF54919">
    <property type="entry name" value="Nucleoside diphosphate kinase, NDK"/>
    <property type="match status" value="1"/>
</dbReference>
<dbReference type="PROSITE" id="PS00469">
    <property type="entry name" value="NDPK"/>
    <property type="match status" value="1"/>
</dbReference>
<dbReference type="PROSITE" id="PS51374">
    <property type="entry name" value="NDPK_LIKE"/>
    <property type="match status" value="1"/>
</dbReference>
<feature type="chain" id="PRO_1000135260" description="Nucleoside diphosphate kinase">
    <location>
        <begin position="1"/>
        <end position="147"/>
    </location>
</feature>
<feature type="active site" description="Pros-phosphohistidine intermediate" evidence="1">
    <location>
        <position position="115"/>
    </location>
</feature>
<feature type="binding site" evidence="1">
    <location>
        <position position="9"/>
    </location>
    <ligand>
        <name>ATP</name>
        <dbReference type="ChEBI" id="CHEBI:30616"/>
    </ligand>
</feature>
<feature type="binding site" evidence="1">
    <location>
        <position position="57"/>
    </location>
    <ligand>
        <name>ATP</name>
        <dbReference type="ChEBI" id="CHEBI:30616"/>
    </ligand>
</feature>
<feature type="binding site" evidence="1">
    <location>
        <position position="85"/>
    </location>
    <ligand>
        <name>ATP</name>
        <dbReference type="ChEBI" id="CHEBI:30616"/>
    </ligand>
</feature>
<feature type="binding site" evidence="1">
    <location>
        <position position="91"/>
    </location>
    <ligand>
        <name>ATP</name>
        <dbReference type="ChEBI" id="CHEBI:30616"/>
    </ligand>
</feature>
<feature type="binding site" evidence="1">
    <location>
        <position position="102"/>
    </location>
    <ligand>
        <name>ATP</name>
        <dbReference type="ChEBI" id="CHEBI:30616"/>
    </ligand>
</feature>
<feature type="binding site" evidence="1">
    <location>
        <position position="112"/>
    </location>
    <ligand>
        <name>ATP</name>
        <dbReference type="ChEBI" id="CHEBI:30616"/>
    </ligand>
</feature>
<evidence type="ECO:0000255" key="1">
    <source>
        <dbReference type="HAMAP-Rule" id="MF_00451"/>
    </source>
</evidence>
<organism>
    <name type="scientific">Listeria monocytogenes serotype 4a (strain HCC23)</name>
    <dbReference type="NCBI Taxonomy" id="552536"/>
    <lineage>
        <taxon>Bacteria</taxon>
        <taxon>Bacillati</taxon>
        <taxon>Bacillota</taxon>
        <taxon>Bacilli</taxon>
        <taxon>Bacillales</taxon>
        <taxon>Listeriaceae</taxon>
        <taxon>Listeria</taxon>
    </lineage>
</organism>
<comment type="function">
    <text evidence="1">Major role in the synthesis of nucleoside triphosphates other than ATP. The ATP gamma phosphate is transferred to the NDP beta phosphate via a ping-pong mechanism, using a phosphorylated active-site intermediate.</text>
</comment>
<comment type="catalytic activity">
    <reaction evidence="1">
        <text>a 2'-deoxyribonucleoside 5'-diphosphate + ATP = a 2'-deoxyribonucleoside 5'-triphosphate + ADP</text>
        <dbReference type="Rhea" id="RHEA:44640"/>
        <dbReference type="ChEBI" id="CHEBI:30616"/>
        <dbReference type="ChEBI" id="CHEBI:61560"/>
        <dbReference type="ChEBI" id="CHEBI:73316"/>
        <dbReference type="ChEBI" id="CHEBI:456216"/>
        <dbReference type="EC" id="2.7.4.6"/>
    </reaction>
</comment>
<comment type="catalytic activity">
    <reaction evidence="1">
        <text>a ribonucleoside 5'-diphosphate + ATP = a ribonucleoside 5'-triphosphate + ADP</text>
        <dbReference type="Rhea" id="RHEA:18113"/>
        <dbReference type="ChEBI" id="CHEBI:30616"/>
        <dbReference type="ChEBI" id="CHEBI:57930"/>
        <dbReference type="ChEBI" id="CHEBI:61557"/>
        <dbReference type="ChEBI" id="CHEBI:456216"/>
        <dbReference type="EC" id="2.7.4.6"/>
    </reaction>
</comment>
<comment type="cofactor">
    <cofactor evidence="1">
        <name>Mg(2+)</name>
        <dbReference type="ChEBI" id="CHEBI:18420"/>
    </cofactor>
</comment>
<comment type="subunit">
    <text evidence="1">Homotetramer.</text>
</comment>
<comment type="subcellular location">
    <subcellularLocation>
        <location evidence="1">Cytoplasm</location>
    </subcellularLocation>
</comment>
<comment type="similarity">
    <text evidence="1">Belongs to the NDK family.</text>
</comment>
<reference key="1">
    <citation type="journal article" date="2011" name="J. Bacteriol.">
        <title>Genome sequence of lineage III Listeria monocytogenes strain HCC23.</title>
        <authorList>
            <person name="Steele C.L."/>
            <person name="Donaldson J.R."/>
            <person name="Paul D."/>
            <person name="Banes M.M."/>
            <person name="Arick T."/>
            <person name="Bridges S.M."/>
            <person name="Lawrence M.L."/>
        </authorList>
    </citation>
    <scope>NUCLEOTIDE SEQUENCE [LARGE SCALE GENOMIC DNA]</scope>
    <source>
        <strain>HCC23</strain>
    </source>
</reference>
<name>NDK_LISMH</name>
<gene>
    <name evidence="1" type="primary">ndk</name>
    <name type="ordered locus">LMHCC_0627</name>
</gene>